<protein>
    <recommendedName>
        <fullName evidence="1">Elongation factor Ts</fullName>
        <shortName evidence="1">EF-Ts</shortName>
    </recommendedName>
</protein>
<keyword id="KW-0963">Cytoplasm</keyword>
<keyword id="KW-0251">Elongation factor</keyword>
<keyword id="KW-0648">Protein biosynthesis</keyword>
<keyword id="KW-1185">Reference proteome</keyword>
<dbReference type="EMBL" id="CP000143">
    <property type="protein sequence ID" value="ABA78949.1"/>
    <property type="molecule type" value="Genomic_DNA"/>
</dbReference>
<dbReference type="RefSeq" id="WP_002719943.1">
    <property type="nucleotide sequence ID" value="NZ_CP030271.1"/>
</dbReference>
<dbReference type="RefSeq" id="YP_352850.1">
    <property type="nucleotide sequence ID" value="NC_007493.2"/>
</dbReference>
<dbReference type="SMR" id="Q3J2N5"/>
<dbReference type="STRING" id="272943.RSP_2861"/>
<dbReference type="EnsemblBacteria" id="ABA78949">
    <property type="protein sequence ID" value="ABA78949"/>
    <property type="gene ID" value="RSP_2861"/>
</dbReference>
<dbReference type="GeneID" id="67446526"/>
<dbReference type="KEGG" id="rsp:RSP_2861"/>
<dbReference type="PATRIC" id="fig|272943.9.peg.1715"/>
<dbReference type="eggNOG" id="COG0264">
    <property type="taxonomic scope" value="Bacteria"/>
</dbReference>
<dbReference type="OrthoDB" id="9808348at2"/>
<dbReference type="PhylomeDB" id="Q3J2N5"/>
<dbReference type="Proteomes" id="UP000002703">
    <property type="component" value="Chromosome 1"/>
</dbReference>
<dbReference type="GO" id="GO:0005737">
    <property type="term" value="C:cytoplasm"/>
    <property type="evidence" value="ECO:0007669"/>
    <property type="project" value="UniProtKB-SubCell"/>
</dbReference>
<dbReference type="GO" id="GO:0003746">
    <property type="term" value="F:translation elongation factor activity"/>
    <property type="evidence" value="ECO:0007669"/>
    <property type="project" value="UniProtKB-UniRule"/>
</dbReference>
<dbReference type="CDD" id="cd14275">
    <property type="entry name" value="UBA_EF-Ts"/>
    <property type="match status" value="1"/>
</dbReference>
<dbReference type="FunFam" id="1.10.8.10:FF:000001">
    <property type="entry name" value="Elongation factor Ts"/>
    <property type="match status" value="1"/>
</dbReference>
<dbReference type="Gene3D" id="1.10.286.20">
    <property type="match status" value="1"/>
</dbReference>
<dbReference type="Gene3D" id="1.10.8.10">
    <property type="entry name" value="DNA helicase RuvA subunit, C-terminal domain"/>
    <property type="match status" value="1"/>
</dbReference>
<dbReference type="Gene3D" id="3.30.479.20">
    <property type="entry name" value="Elongation factor Ts, dimerisation domain"/>
    <property type="match status" value="2"/>
</dbReference>
<dbReference type="HAMAP" id="MF_00050">
    <property type="entry name" value="EF_Ts"/>
    <property type="match status" value="1"/>
</dbReference>
<dbReference type="InterPro" id="IPR036402">
    <property type="entry name" value="EF-Ts_dimer_sf"/>
</dbReference>
<dbReference type="InterPro" id="IPR001816">
    <property type="entry name" value="Transl_elong_EFTs/EF1B"/>
</dbReference>
<dbReference type="InterPro" id="IPR014039">
    <property type="entry name" value="Transl_elong_EFTs/EF1B_dimer"/>
</dbReference>
<dbReference type="InterPro" id="IPR018101">
    <property type="entry name" value="Transl_elong_Ts_CS"/>
</dbReference>
<dbReference type="InterPro" id="IPR009060">
    <property type="entry name" value="UBA-like_sf"/>
</dbReference>
<dbReference type="NCBIfam" id="TIGR00116">
    <property type="entry name" value="tsf"/>
    <property type="match status" value="1"/>
</dbReference>
<dbReference type="PANTHER" id="PTHR11741">
    <property type="entry name" value="ELONGATION FACTOR TS"/>
    <property type="match status" value="1"/>
</dbReference>
<dbReference type="PANTHER" id="PTHR11741:SF0">
    <property type="entry name" value="ELONGATION FACTOR TS, MITOCHONDRIAL"/>
    <property type="match status" value="1"/>
</dbReference>
<dbReference type="Pfam" id="PF00889">
    <property type="entry name" value="EF_TS"/>
    <property type="match status" value="1"/>
</dbReference>
<dbReference type="SUPFAM" id="SSF54713">
    <property type="entry name" value="Elongation factor Ts (EF-Ts), dimerisation domain"/>
    <property type="match status" value="2"/>
</dbReference>
<dbReference type="SUPFAM" id="SSF46934">
    <property type="entry name" value="UBA-like"/>
    <property type="match status" value="1"/>
</dbReference>
<dbReference type="PROSITE" id="PS01126">
    <property type="entry name" value="EF_TS_1"/>
    <property type="match status" value="1"/>
</dbReference>
<dbReference type="PROSITE" id="PS01127">
    <property type="entry name" value="EF_TS_2"/>
    <property type="match status" value="1"/>
</dbReference>
<feature type="chain" id="PRO_0000241516" description="Elongation factor Ts">
    <location>
        <begin position="1"/>
        <end position="298"/>
    </location>
</feature>
<feature type="region of interest" description="Involved in Mg(2+) ion dislocation from EF-Tu" evidence="1">
    <location>
        <begin position="79"/>
        <end position="82"/>
    </location>
</feature>
<organism>
    <name type="scientific">Cereibacter sphaeroides (strain ATCC 17023 / DSM 158 / JCM 6121 / CCUG 31486 / LMG 2827 / NBRC 12203 / NCIMB 8253 / ATH 2.4.1.)</name>
    <name type="common">Rhodobacter sphaeroides</name>
    <dbReference type="NCBI Taxonomy" id="272943"/>
    <lineage>
        <taxon>Bacteria</taxon>
        <taxon>Pseudomonadati</taxon>
        <taxon>Pseudomonadota</taxon>
        <taxon>Alphaproteobacteria</taxon>
        <taxon>Rhodobacterales</taxon>
        <taxon>Paracoccaceae</taxon>
        <taxon>Cereibacter</taxon>
    </lineage>
</organism>
<name>EFTS_CERS4</name>
<proteinExistence type="inferred from homology"/>
<accession>Q3J2N5</accession>
<sequence length="298" mass="31120">MAITAQMVKELRESTGAGMMDAKKALTETDGDMEAAVDWLRTKGLAKAAKKAGRTAAEGLVGVCVDGGTGVAVEVNSETDFVAKNADFQSMVTGFTKAALTVDDIEALKAADMGGKTVETTLQETIAVIGENMTLRRMAKISGDSVAAYVHNAAADGLGKIGVLVAVKGADNGIAKQVAMHIAATNPMALSEADLDPTVVERERTVQTQKALEENAASAKPKPDAVIENNIIPGRMKKFLEENTLLGQKFVINPDLTVAEAAKQAGVEIVGFVRMAVGEGIEKEKEDFAAEVAKTLAG</sequence>
<comment type="function">
    <text evidence="1">Associates with the EF-Tu.GDP complex and induces the exchange of GDP to GTP. It remains bound to the aminoacyl-tRNA.EF-Tu.GTP complex up to the GTP hydrolysis stage on the ribosome.</text>
</comment>
<comment type="subcellular location">
    <subcellularLocation>
        <location evidence="1">Cytoplasm</location>
    </subcellularLocation>
</comment>
<comment type="similarity">
    <text evidence="1">Belongs to the EF-Ts family.</text>
</comment>
<evidence type="ECO:0000255" key="1">
    <source>
        <dbReference type="HAMAP-Rule" id="MF_00050"/>
    </source>
</evidence>
<reference key="1">
    <citation type="submission" date="2005-09" db="EMBL/GenBank/DDBJ databases">
        <title>Complete sequence of chromosome 1 of Rhodobacter sphaeroides 2.4.1.</title>
        <authorList>
            <person name="Copeland A."/>
            <person name="Lucas S."/>
            <person name="Lapidus A."/>
            <person name="Barry K."/>
            <person name="Detter J.C."/>
            <person name="Glavina T."/>
            <person name="Hammon N."/>
            <person name="Israni S."/>
            <person name="Pitluck S."/>
            <person name="Richardson P."/>
            <person name="Mackenzie C."/>
            <person name="Choudhary M."/>
            <person name="Larimer F."/>
            <person name="Hauser L.J."/>
            <person name="Land M."/>
            <person name="Donohue T.J."/>
            <person name="Kaplan S."/>
        </authorList>
    </citation>
    <scope>NUCLEOTIDE SEQUENCE [LARGE SCALE GENOMIC DNA]</scope>
    <source>
        <strain>ATCC 17023 / DSM 158 / JCM 6121 / CCUG 31486 / LMG 2827 / NBRC 12203 / NCIMB 8253 / ATH 2.4.1.</strain>
    </source>
</reference>
<gene>
    <name evidence="1" type="primary">tsf</name>
    <name type="ordered locus">RHOS4_13810</name>
    <name type="ORF">RSP_2861</name>
</gene>